<dbReference type="EC" id="3.4.21.59"/>
<dbReference type="EMBL" id="U67910">
    <property type="protein sequence ID" value="AAB48263.1"/>
    <property type="molecule type" value="mRNA"/>
</dbReference>
<dbReference type="PIR" id="A23698">
    <property type="entry name" value="A23698"/>
</dbReference>
<dbReference type="PIR" id="S21275">
    <property type="entry name" value="S21275"/>
</dbReference>
<dbReference type="RefSeq" id="NP_062195.2">
    <property type="nucleotide sequence ID" value="NM_019322.2"/>
</dbReference>
<dbReference type="SMR" id="P27435"/>
<dbReference type="FunCoup" id="P27435">
    <property type="interactions" value="52"/>
</dbReference>
<dbReference type="STRING" id="10116.ENSRNOP00000025095"/>
<dbReference type="BindingDB" id="P27435"/>
<dbReference type="ChEMBL" id="CHEMBL3320"/>
<dbReference type="MEROPS" id="S01.026"/>
<dbReference type="MEROPS" id="S01.143"/>
<dbReference type="GlyCosmos" id="P27435">
    <property type="glycosylation" value="1 site, No reported glycans"/>
</dbReference>
<dbReference type="GlyGen" id="P27435">
    <property type="glycosylation" value="1 site"/>
</dbReference>
<dbReference type="PhosphoSitePlus" id="P27435"/>
<dbReference type="PaxDb" id="10116-ENSRNOP00000025095"/>
<dbReference type="GeneID" id="54271"/>
<dbReference type="KEGG" id="rno:54271"/>
<dbReference type="UCSC" id="RGD:3066">
    <property type="organism name" value="rat"/>
</dbReference>
<dbReference type="AGR" id="RGD:3066"/>
<dbReference type="CTD" id="7177"/>
<dbReference type="RGD" id="3066">
    <property type="gene designation" value="Tpsab1"/>
</dbReference>
<dbReference type="eggNOG" id="KOG3627">
    <property type="taxonomic scope" value="Eukaryota"/>
</dbReference>
<dbReference type="InParanoid" id="P27435"/>
<dbReference type="OrthoDB" id="10002959at2759"/>
<dbReference type="PhylomeDB" id="P27435"/>
<dbReference type="PRO" id="PR:P27435"/>
<dbReference type="Proteomes" id="UP000002494">
    <property type="component" value="Unplaced"/>
</dbReference>
<dbReference type="GO" id="GO:0005615">
    <property type="term" value="C:extracellular space"/>
    <property type="evidence" value="ECO:0000266"/>
    <property type="project" value="RGD"/>
</dbReference>
<dbReference type="GO" id="GO:0042629">
    <property type="term" value="C:mast cell granule"/>
    <property type="evidence" value="ECO:0000266"/>
    <property type="project" value="RGD"/>
</dbReference>
<dbReference type="GO" id="GO:0042802">
    <property type="term" value="F:identical protein binding"/>
    <property type="evidence" value="ECO:0000266"/>
    <property type="project" value="RGD"/>
</dbReference>
<dbReference type="GO" id="GO:0008233">
    <property type="term" value="F:peptidase activity"/>
    <property type="evidence" value="ECO:0000266"/>
    <property type="project" value="RGD"/>
</dbReference>
<dbReference type="GO" id="GO:0004252">
    <property type="term" value="F:serine-type endopeptidase activity"/>
    <property type="evidence" value="ECO:0000318"/>
    <property type="project" value="GO_Central"/>
</dbReference>
<dbReference type="GO" id="GO:0022617">
    <property type="term" value="P:extracellular matrix disassembly"/>
    <property type="evidence" value="ECO:0000266"/>
    <property type="project" value="RGD"/>
</dbReference>
<dbReference type="GO" id="GO:0006508">
    <property type="term" value="P:proteolysis"/>
    <property type="evidence" value="ECO:0000266"/>
    <property type="project" value="RGD"/>
</dbReference>
<dbReference type="CDD" id="cd00190">
    <property type="entry name" value="Tryp_SPc"/>
    <property type="match status" value="1"/>
</dbReference>
<dbReference type="FunFam" id="2.40.10.10:FF:000039">
    <property type="entry name" value="Brain-specific serine protease 4"/>
    <property type="match status" value="1"/>
</dbReference>
<dbReference type="Gene3D" id="2.40.10.10">
    <property type="entry name" value="Trypsin-like serine proteases"/>
    <property type="match status" value="2"/>
</dbReference>
<dbReference type="InterPro" id="IPR009003">
    <property type="entry name" value="Peptidase_S1_PA"/>
</dbReference>
<dbReference type="InterPro" id="IPR043504">
    <property type="entry name" value="Peptidase_S1_PA_chymotrypsin"/>
</dbReference>
<dbReference type="InterPro" id="IPR001314">
    <property type="entry name" value="Peptidase_S1A"/>
</dbReference>
<dbReference type="InterPro" id="IPR001254">
    <property type="entry name" value="Trypsin_dom"/>
</dbReference>
<dbReference type="InterPro" id="IPR018114">
    <property type="entry name" value="TRYPSIN_HIS"/>
</dbReference>
<dbReference type="InterPro" id="IPR033116">
    <property type="entry name" value="TRYPSIN_SER"/>
</dbReference>
<dbReference type="PANTHER" id="PTHR24253:SF144">
    <property type="entry name" value="CHYMOTRYPSIN-LIKE PROTEASE CTRL-1-RELATED"/>
    <property type="match status" value="1"/>
</dbReference>
<dbReference type="PANTHER" id="PTHR24253">
    <property type="entry name" value="TRANSMEMBRANE PROTEASE SERINE"/>
    <property type="match status" value="1"/>
</dbReference>
<dbReference type="Pfam" id="PF00089">
    <property type="entry name" value="Trypsin"/>
    <property type="match status" value="1"/>
</dbReference>
<dbReference type="PRINTS" id="PR00722">
    <property type="entry name" value="CHYMOTRYPSIN"/>
</dbReference>
<dbReference type="SMART" id="SM00020">
    <property type="entry name" value="Tryp_SPc"/>
    <property type="match status" value="1"/>
</dbReference>
<dbReference type="SUPFAM" id="SSF50494">
    <property type="entry name" value="Trypsin-like serine proteases"/>
    <property type="match status" value="1"/>
</dbReference>
<dbReference type="PROSITE" id="PS50240">
    <property type="entry name" value="TRYPSIN_DOM"/>
    <property type="match status" value="1"/>
</dbReference>
<dbReference type="PROSITE" id="PS00134">
    <property type="entry name" value="TRYPSIN_HIS"/>
    <property type="match status" value="1"/>
</dbReference>
<dbReference type="PROSITE" id="PS00135">
    <property type="entry name" value="TRYPSIN_SER"/>
    <property type="match status" value="1"/>
</dbReference>
<evidence type="ECO:0000250" key="1"/>
<evidence type="ECO:0000250" key="2">
    <source>
        <dbReference type="UniProtKB" id="P21845"/>
    </source>
</evidence>
<evidence type="ECO:0000255" key="3"/>
<evidence type="ECO:0000255" key="4">
    <source>
        <dbReference type="PROSITE-ProRule" id="PRU00274"/>
    </source>
</evidence>
<evidence type="ECO:0000269" key="5">
    <source>
    </source>
</evidence>
<evidence type="ECO:0000269" key="6">
    <source>
    </source>
</evidence>
<evidence type="ECO:0000305" key="7"/>
<proteinExistence type="evidence at protein level"/>
<sequence length="273" mass="30400">MLKLLLLTLPLLSSLVHAAPSLAMPREGIVGGQEASGNKWPWQVSLRVNDTYWMHFCGGSLIHPQWVLTAAHCVGPNKADPNKLRVQLRKQYLYYHDHLLTVSQIISHPDFYIAQDGADIALLKLTNPVNITSNVHTVSLPPASETFPSGTLCWVTGWGNINNDVSLPPPFPLEEVQVPIVENRLCDLKYHKGLNTGDNVHIVRDDMLCAGNEGHDSCQGDSGGPLVCKVEDTWLQAGVVSWGEGCAQPNRPGIYTRVTYYLDWIYRYVPKYF</sequence>
<protein>
    <recommendedName>
        <fullName>Tryptase</fullName>
        <ecNumber>3.4.21.59</ecNumber>
    </recommendedName>
    <alternativeName>
        <fullName>Mast cell protease 7</fullName>
        <shortName>rMCP-7</shortName>
    </alternativeName>
    <alternativeName>
        <fullName>Tryptase alpha/beta-1</fullName>
    </alternativeName>
    <alternativeName>
        <fullName>Tryptase, skin</fullName>
    </alternativeName>
</protein>
<organism>
    <name type="scientific">Rattus norvegicus</name>
    <name type="common">Rat</name>
    <dbReference type="NCBI Taxonomy" id="10116"/>
    <lineage>
        <taxon>Eukaryota</taxon>
        <taxon>Metazoa</taxon>
        <taxon>Chordata</taxon>
        <taxon>Craniata</taxon>
        <taxon>Vertebrata</taxon>
        <taxon>Euteleostomi</taxon>
        <taxon>Mammalia</taxon>
        <taxon>Eutheria</taxon>
        <taxon>Euarchontoglires</taxon>
        <taxon>Glires</taxon>
        <taxon>Rodentia</taxon>
        <taxon>Myomorpha</taxon>
        <taxon>Muroidea</taxon>
        <taxon>Muridae</taxon>
        <taxon>Murinae</taxon>
        <taxon>Rattus</taxon>
    </lineage>
</organism>
<reference key="1">
    <citation type="journal article" date="1997" name="J. Exp. Med.">
        <title>Secretory granule proteases in rat mast cells. Cloning of 10 different serine proteases and a carboxypeptidase A from various rat mast cell populations.</title>
        <authorList>
            <person name="Lutzelschwab C."/>
            <person name="Pejler G."/>
            <person name="Aveskogh M."/>
            <person name="Hellman L."/>
        </authorList>
    </citation>
    <scope>NUCLEOTIDE SEQUENCE [MRNA]</scope>
    <source>
        <strain>Sprague-Dawley</strain>
    </source>
</reference>
<reference key="2">
    <citation type="journal article" date="1991" name="Biochemistry">
        <title>Tryptase from rat skin: purification and properties.</title>
        <authorList>
            <person name="Braganza V.J."/>
            <person name="Simmons W.H."/>
        </authorList>
    </citation>
    <scope>PROTEIN SEQUENCE OF 29-53</scope>
    <source>
        <strain>Sprague-Dawley</strain>
        <tissue>Skin</tissue>
    </source>
</reference>
<reference key="3">
    <citation type="journal article" date="1992" name="Biochem. J.">
        <title>Separation, purification and N-terminal sequence analysis of a novel leupeptin-sensitive serine endopeptidase present in chemically induced rat mammary tumour.</title>
        <authorList>
            <person name="Eto I."/>
            <person name="Grubbs C.J."/>
        </authorList>
    </citation>
    <scope>PROTEIN SEQUENCE OF 29-51</scope>
    <source>
        <tissue>Mammary carcinoma</tissue>
    </source>
</reference>
<accession>P27435</accession>
<accession>P27436</accession>
<keyword id="KW-0903">Direct protein sequencing</keyword>
<keyword id="KW-1015">Disulfide bond</keyword>
<keyword id="KW-0325">Glycoprotein</keyword>
<keyword id="KW-0378">Hydrolase</keyword>
<keyword id="KW-0645">Protease</keyword>
<keyword id="KW-1185">Reference proteome</keyword>
<keyword id="KW-0964">Secreted</keyword>
<keyword id="KW-0720">Serine protease</keyword>
<keyword id="KW-0732">Signal</keyword>
<keyword id="KW-0865">Zymogen</keyword>
<name>TRYB1_RAT</name>
<gene>
    <name type="primary">Tpsab1</name>
    <name type="synonym">Mcp7</name>
    <name type="synonym">Mcpt7</name>
    <name type="synonym">Tpsb1</name>
</gene>
<comment type="function">
    <text evidence="2">Tryptase is the major neutral protease present in mast cells and is secreted upon the coupled activation-degranulation response of this cell type. May play a role in innate immunity (By similarity).</text>
</comment>
<comment type="catalytic activity">
    <reaction>
        <text>Preferential cleavage: Arg-|-Xaa, Lys-|-Xaa, but with more restricted specificity than trypsin.</text>
        <dbReference type="EC" id="3.4.21.59"/>
    </reaction>
</comment>
<comment type="subunit">
    <text>Homotetramer.</text>
</comment>
<comment type="subcellular location">
    <subcellularLocation>
        <location>Secreted</location>
    </subcellularLocation>
    <text>Released from the secretory granules upon mast cell activation.</text>
</comment>
<comment type="tissue specificity">
    <text>Mast cells.</text>
</comment>
<comment type="PTM">
    <text evidence="7">Glycosylated.</text>
</comment>
<comment type="similarity">
    <text evidence="4">Belongs to the peptidase S1 family. Tryptase subfamily.</text>
</comment>
<feature type="signal peptide" evidence="3">
    <location>
        <begin position="1"/>
        <end position="18"/>
    </location>
</feature>
<feature type="propeptide" id="PRO_0000027496" description="Activation peptide" evidence="5 6">
    <location>
        <begin position="19"/>
        <end position="28"/>
    </location>
</feature>
<feature type="chain" id="PRO_0000027497" description="Tryptase">
    <location>
        <begin position="29"/>
        <end position="273"/>
    </location>
</feature>
<feature type="domain" description="Peptidase S1" evidence="4">
    <location>
        <begin position="29"/>
        <end position="270"/>
    </location>
</feature>
<feature type="active site" description="Charge relay system" evidence="1">
    <location>
        <position position="72"/>
    </location>
</feature>
<feature type="active site" description="Charge relay system" evidence="1">
    <location>
        <position position="119"/>
    </location>
</feature>
<feature type="active site" description="Charge relay system" evidence="1">
    <location>
        <position position="222"/>
    </location>
</feature>
<feature type="glycosylation site" description="N-linked (GlcNAc...) asparagine" evidence="7">
    <location>
        <position position="49"/>
    </location>
</feature>
<feature type="disulfide bond" evidence="4">
    <location>
        <begin position="57"/>
        <end position="73"/>
    </location>
</feature>
<feature type="disulfide bond" evidence="4">
    <location>
        <begin position="153"/>
        <end position="228"/>
    </location>
</feature>
<feature type="disulfide bond" evidence="4">
    <location>
        <begin position="186"/>
        <end position="209"/>
    </location>
</feature>
<feature type="disulfide bond" evidence="4">
    <location>
        <begin position="218"/>
        <end position="246"/>
    </location>
</feature>
<feature type="sequence conflict" description="In Ref. 3; AA sequence." evidence="7" ref="3">
    <original>W</original>
    <variation>V</variation>
    <location>
        <position position="42"/>
    </location>
</feature>
<feature type="sequence conflict" description="In Ref. 3; AA sequence." evidence="7" ref="3">
    <original>NDT</original>
    <variation>WLP</variation>
    <location>
        <begin position="49"/>
        <end position="51"/>
    </location>
</feature>